<protein>
    <recommendedName>
        <fullName evidence="1">Isoleucine--tRNA ligase</fullName>
        <ecNumber evidence="1">6.1.1.5</ecNumber>
    </recommendedName>
    <alternativeName>
        <fullName evidence="1">Isoleucyl-tRNA synthetase</fullName>
        <shortName evidence="1">IleRS</shortName>
    </alternativeName>
</protein>
<reference key="1">
    <citation type="journal article" date="1996" name="DNA Res.">
        <title>Sequence analysis of the genome of the unicellular cyanobacterium Synechocystis sp. strain PCC6803. II. Sequence determination of the entire genome and assignment of potential protein-coding regions.</title>
        <authorList>
            <person name="Kaneko T."/>
            <person name="Sato S."/>
            <person name="Kotani H."/>
            <person name="Tanaka A."/>
            <person name="Asamizu E."/>
            <person name="Nakamura Y."/>
            <person name="Miyajima N."/>
            <person name="Hirosawa M."/>
            <person name="Sugiura M."/>
            <person name="Sasamoto S."/>
            <person name="Kimura T."/>
            <person name="Hosouchi T."/>
            <person name="Matsuno A."/>
            <person name="Muraki A."/>
            <person name="Nakazaki N."/>
            <person name="Naruo K."/>
            <person name="Okumura S."/>
            <person name="Shimpo S."/>
            <person name="Takeuchi C."/>
            <person name="Wada T."/>
            <person name="Watanabe A."/>
            <person name="Yamada M."/>
            <person name="Yasuda M."/>
            <person name="Tabata S."/>
        </authorList>
    </citation>
    <scope>NUCLEOTIDE SEQUENCE [LARGE SCALE GENOMIC DNA]</scope>
    <source>
        <strain>ATCC 27184 / PCC 6803 / Kazusa</strain>
    </source>
</reference>
<feature type="chain" id="PRO_0000098492" description="Isoleucine--tRNA ligase">
    <location>
        <begin position="1"/>
        <end position="988"/>
    </location>
</feature>
<feature type="short sequence motif" description="'HIGH' region">
    <location>
        <begin position="60"/>
        <end position="70"/>
    </location>
</feature>
<feature type="short sequence motif" description="'KMSKS' region">
    <location>
        <begin position="611"/>
        <end position="615"/>
    </location>
</feature>
<feature type="binding site" evidence="1">
    <location>
        <position position="570"/>
    </location>
    <ligand>
        <name>L-isoleucyl-5'-AMP</name>
        <dbReference type="ChEBI" id="CHEBI:178002"/>
    </ligand>
</feature>
<feature type="binding site" evidence="1">
    <location>
        <position position="614"/>
    </location>
    <ligand>
        <name>ATP</name>
        <dbReference type="ChEBI" id="CHEBI:30616"/>
    </ligand>
</feature>
<feature type="binding site" evidence="1">
    <location>
        <position position="957"/>
    </location>
    <ligand>
        <name>Zn(2+)</name>
        <dbReference type="ChEBI" id="CHEBI:29105"/>
    </ligand>
</feature>
<feature type="binding site" evidence="1">
    <location>
        <position position="960"/>
    </location>
    <ligand>
        <name>Zn(2+)</name>
        <dbReference type="ChEBI" id="CHEBI:29105"/>
    </ligand>
</feature>
<feature type="binding site" evidence="1">
    <location>
        <position position="977"/>
    </location>
    <ligand>
        <name>Zn(2+)</name>
        <dbReference type="ChEBI" id="CHEBI:29105"/>
    </ligand>
</feature>
<feature type="binding site" evidence="1">
    <location>
        <position position="980"/>
    </location>
    <ligand>
        <name>Zn(2+)</name>
        <dbReference type="ChEBI" id="CHEBI:29105"/>
    </ligand>
</feature>
<dbReference type="EC" id="6.1.1.5" evidence="1"/>
<dbReference type="EMBL" id="BA000022">
    <property type="protein sequence ID" value="BAA17545.1"/>
    <property type="molecule type" value="Genomic_DNA"/>
</dbReference>
<dbReference type="PIR" id="S77211">
    <property type="entry name" value="S77211"/>
</dbReference>
<dbReference type="SMR" id="P73505"/>
<dbReference type="FunCoup" id="P73505">
    <property type="interactions" value="457"/>
</dbReference>
<dbReference type="IntAct" id="P73505">
    <property type="interactions" value="1"/>
</dbReference>
<dbReference type="STRING" id="1148.gene:10498410"/>
<dbReference type="PaxDb" id="1148-1652625"/>
<dbReference type="EnsemblBacteria" id="BAA17545">
    <property type="protein sequence ID" value="BAA17545"/>
    <property type="gene ID" value="BAA17545"/>
</dbReference>
<dbReference type="KEGG" id="syn:sll1362"/>
<dbReference type="eggNOG" id="COG0060">
    <property type="taxonomic scope" value="Bacteria"/>
</dbReference>
<dbReference type="InParanoid" id="P73505"/>
<dbReference type="PhylomeDB" id="P73505"/>
<dbReference type="Proteomes" id="UP000001425">
    <property type="component" value="Chromosome"/>
</dbReference>
<dbReference type="GO" id="GO:0005737">
    <property type="term" value="C:cytoplasm"/>
    <property type="evidence" value="ECO:0007669"/>
    <property type="project" value="UniProtKB-SubCell"/>
</dbReference>
<dbReference type="GO" id="GO:0002161">
    <property type="term" value="F:aminoacyl-tRNA deacylase activity"/>
    <property type="evidence" value="ECO:0007669"/>
    <property type="project" value="InterPro"/>
</dbReference>
<dbReference type="GO" id="GO:0005524">
    <property type="term" value="F:ATP binding"/>
    <property type="evidence" value="ECO:0007669"/>
    <property type="project" value="UniProtKB-UniRule"/>
</dbReference>
<dbReference type="GO" id="GO:0004822">
    <property type="term" value="F:isoleucine-tRNA ligase activity"/>
    <property type="evidence" value="ECO:0000318"/>
    <property type="project" value="GO_Central"/>
</dbReference>
<dbReference type="GO" id="GO:0000049">
    <property type="term" value="F:tRNA binding"/>
    <property type="evidence" value="ECO:0007669"/>
    <property type="project" value="InterPro"/>
</dbReference>
<dbReference type="GO" id="GO:0008270">
    <property type="term" value="F:zinc ion binding"/>
    <property type="evidence" value="ECO:0007669"/>
    <property type="project" value="UniProtKB-UniRule"/>
</dbReference>
<dbReference type="GO" id="GO:0006428">
    <property type="term" value="P:isoleucyl-tRNA aminoacylation"/>
    <property type="evidence" value="ECO:0000318"/>
    <property type="project" value="GO_Central"/>
</dbReference>
<dbReference type="GO" id="GO:0006412">
    <property type="term" value="P:translation"/>
    <property type="evidence" value="ECO:0000318"/>
    <property type="project" value="GO_Central"/>
</dbReference>
<dbReference type="CDD" id="cd07960">
    <property type="entry name" value="Anticodon_Ia_Ile_BEm"/>
    <property type="match status" value="1"/>
</dbReference>
<dbReference type="CDD" id="cd00818">
    <property type="entry name" value="IleRS_core"/>
    <property type="match status" value="1"/>
</dbReference>
<dbReference type="FunFam" id="1.10.730.20:FF:000001">
    <property type="entry name" value="Isoleucine--tRNA ligase"/>
    <property type="match status" value="1"/>
</dbReference>
<dbReference type="FunFam" id="3.40.50.620:FF:000168">
    <property type="entry name" value="Isoleucine--tRNA ligase"/>
    <property type="match status" value="1"/>
</dbReference>
<dbReference type="FunFam" id="3.90.740.10:FF:000013">
    <property type="entry name" value="Isoleucine--tRNA ligase, chloroplastic/mitochondrial"/>
    <property type="match status" value="1"/>
</dbReference>
<dbReference type="FunFam" id="1.10.10.830:FF:000002">
    <property type="entry name" value="Isoleucine--tRNA ligase, mitochondrial"/>
    <property type="match status" value="1"/>
</dbReference>
<dbReference type="Gene3D" id="1.10.730.20">
    <property type="match status" value="1"/>
</dbReference>
<dbReference type="Gene3D" id="3.40.50.620">
    <property type="entry name" value="HUPs"/>
    <property type="match status" value="2"/>
</dbReference>
<dbReference type="Gene3D" id="1.10.10.830">
    <property type="entry name" value="Ile-tRNA synthetase CP2 domain-like"/>
    <property type="match status" value="1"/>
</dbReference>
<dbReference type="HAMAP" id="MF_02002">
    <property type="entry name" value="Ile_tRNA_synth_type1"/>
    <property type="match status" value="1"/>
</dbReference>
<dbReference type="InterPro" id="IPR001412">
    <property type="entry name" value="aa-tRNA-synth_I_CS"/>
</dbReference>
<dbReference type="InterPro" id="IPR002300">
    <property type="entry name" value="aa-tRNA-synth_Ia"/>
</dbReference>
<dbReference type="InterPro" id="IPR033708">
    <property type="entry name" value="Anticodon_Ile_BEm"/>
</dbReference>
<dbReference type="InterPro" id="IPR002301">
    <property type="entry name" value="Ile-tRNA-ligase"/>
</dbReference>
<dbReference type="InterPro" id="IPR023585">
    <property type="entry name" value="Ile-tRNA-ligase_type1"/>
</dbReference>
<dbReference type="InterPro" id="IPR050081">
    <property type="entry name" value="Ile-tRNA_ligase"/>
</dbReference>
<dbReference type="InterPro" id="IPR013155">
    <property type="entry name" value="M/V/L/I-tRNA-synth_anticd-bd"/>
</dbReference>
<dbReference type="InterPro" id="IPR014729">
    <property type="entry name" value="Rossmann-like_a/b/a_fold"/>
</dbReference>
<dbReference type="InterPro" id="IPR009080">
    <property type="entry name" value="tRNAsynth_Ia_anticodon-bd"/>
</dbReference>
<dbReference type="InterPro" id="IPR009008">
    <property type="entry name" value="Val/Leu/Ile-tRNA-synth_edit"/>
</dbReference>
<dbReference type="InterPro" id="IPR010663">
    <property type="entry name" value="Znf_FPG/IleRS"/>
</dbReference>
<dbReference type="NCBIfam" id="TIGR00392">
    <property type="entry name" value="ileS"/>
    <property type="match status" value="1"/>
</dbReference>
<dbReference type="PANTHER" id="PTHR42765:SF1">
    <property type="entry name" value="ISOLEUCINE--TRNA LIGASE, MITOCHONDRIAL"/>
    <property type="match status" value="1"/>
</dbReference>
<dbReference type="PANTHER" id="PTHR42765">
    <property type="entry name" value="SOLEUCYL-TRNA SYNTHETASE"/>
    <property type="match status" value="1"/>
</dbReference>
<dbReference type="Pfam" id="PF08264">
    <property type="entry name" value="Anticodon_1"/>
    <property type="match status" value="1"/>
</dbReference>
<dbReference type="Pfam" id="PF00133">
    <property type="entry name" value="tRNA-synt_1"/>
    <property type="match status" value="1"/>
</dbReference>
<dbReference type="Pfam" id="PF06827">
    <property type="entry name" value="zf-FPG_IleRS"/>
    <property type="match status" value="1"/>
</dbReference>
<dbReference type="PRINTS" id="PR00984">
    <property type="entry name" value="TRNASYNTHILE"/>
</dbReference>
<dbReference type="SUPFAM" id="SSF47323">
    <property type="entry name" value="Anticodon-binding domain of a subclass of class I aminoacyl-tRNA synthetases"/>
    <property type="match status" value="1"/>
</dbReference>
<dbReference type="SUPFAM" id="SSF52374">
    <property type="entry name" value="Nucleotidylyl transferase"/>
    <property type="match status" value="1"/>
</dbReference>
<dbReference type="SUPFAM" id="SSF50677">
    <property type="entry name" value="ValRS/IleRS/LeuRS editing domain"/>
    <property type="match status" value="1"/>
</dbReference>
<dbReference type="PROSITE" id="PS00178">
    <property type="entry name" value="AA_TRNA_LIGASE_I"/>
    <property type="match status" value="1"/>
</dbReference>
<name>SYI_SYNY3</name>
<organism>
    <name type="scientific">Synechocystis sp. (strain ATCC 27184 / PCC 6803 / Kazusa)</name>
    <dbReference type="NCBI Taxonomy" id="1111708"/>
    <lineage>
        <taxon>Bacteria</taxon>
        <taxon>Bacillati</taxon>
        <taxon>Cyanobacteriota</taxon>
        <taxon>Cyanophyceae</taxon>
        <taxon>Synechococcales</taxon>
        <taxon>Merismopediaceae</taxon>
        <taxon>Synechocystis</taxon>
    </lineage>
</organism>
<evidence type="ECO:0000255" key="1">
    <source>
        <dbReference type="HAMAP-Rule" id="MF_02002"/>
    </source>
</evidence>
<gene>
    <name evidence="1" type="primary">ileS</name>
    <name type="ordered locus">sll1362</name>
</gene>
<keyword id="KW-0030">Aminoacyl-tRNA synthetase</keyword>
<keyword id="KW-0067">ATP-binding</keyword>
<keyword id="KW-0963">Cytoplasm</keyword>
<keyword id="KW-0436">Ligase</keyword>
<keyword id="KW-0479">Metal-binding</keyword>
<keyword id="KW-0547">Nucleotide-binding</keyword>
<keyword id="KW-0648">Protein biosynthesis</keyword>
<keyword id="KW-1185">Reference proteome</keyword>
<keyword id="KW-0862">Zinc</keyword>
<proteinExistence type="inferred from homology"/>
<comment type="function">
    <text evidence="1">Catalyzes the attachment of isoleucine to tRNA(Ile). As IleRS can inadvertently accommodate and process structurally similar amino acids such as valine, to avoid such errors it has two additional distinct tRNA(Ile)-dependent editing activities. One activity is designated as 'pretransfer' editing and involves the hydrolysis of activated Val-AMP. The other activity is designated 'posttransfer' editing and involves deacylation of mischarged Val-tRNA(Ile).</text>
</comment>
<comment type="catalytic activity">
    <reaction evidence="1">
        <text>tRNA(Ile) + L-isoleucine + ATP = L-isoleucyl-tRNA(Ile) + AMP + diphosphate</text>
        <dbReference type="Rhea" id="RHEA:11060"/>
        <dbReference type="Rhea" id="RHEA-COMP:9666"/>
        <dbReference type="Rhea" id="RHEA-COMP:9695"/>
        <dbReference type="ChEBI" id="CHEBI:30616"/>
        <dbReference type="ChEBI" id="CHEBI:33019"/>
        <dbReference type="ChEBI" id="CHEBI:58045"/>
        <dbReference type="ChEBI" id="CHEBI:78442"/>
        <dbReference type="ChEBI" id="CHEBI:78528"/>
        <dbReference type="ChEBI" id="CHEBI:456215"/>
        <dbReference type="EC" id="6.1.1.5"/>
    </reaction>
</comment>
<comment type="cofactor">
    <cofactor evidence="1">
        <name>Zn(2+)</name>
        <dbReference type="ChEBI" id="CHEBI:29105"/>
    </cofactor>
    <text evidence="1">Binds 1 zinc ion per subunit.</text>
</comment>
<comment type="subunit">
    <text evidence="1">Monomer.</text>
</comment>
<comment type="subcellular location">
    <subcellularLocation>
        <location evidence="1">Cytoplasm</location>
    </subcellularLocation>
</comment>
<comment type="domain">
    <text evidence="1">IleRS has two distinct active sites: one for aminoacylation and one for editing. The misactivated valine is translocated from the active site to the editing site, which sterically excludes the correctly activated isoleucine. The single editing site contains two valyl binding pockets, one specific for each substrate (Val-AMP or Val-tRNA(Ile)).</text>
</comment>
<comment type="similarity">
    <text evidence="1">Belongs to the class-I aminoacyl-tRNA synthetase family. IleS type 1 subfamily.</text>
</comment>
<sequence length="988" mass="112346">MTEAKSYKDTVNLPQTRFDMRANANKREPEIQQYWQEKGIYADLADNNPKDLFVLHDGPPYANGALHMGHALNKVLKDIINKYKLLQGHKVHYVPGWDCHGLPIELKVLQSLKSSERAELTPLTLRHKARDFALKAQQEQAVGFQRYGIWGDWKKPYLTLTPEYEAAQIGVFGAMALKGYIYRGLKPVHWSPSSRTALAEAELEYPEGHTSRSIYVSFPITQAGEKAAEILAPYIDDLAVAIWTTTPWTLPGNLAVALNPELTYAVVETESHIFHRSYLIVALDLVEKLSETFGVKLTVKVTLQGESLENTCYQHPLFDRVSPIVIGGDYVTTESGTGLVHTAPGHGQEDYVVGQRYGLPILSPVDAAGNLTEEAGKFAGLNVLNDANEAIINALQDQKVLLKEEAYEHKYPYDWRTKKPTIFRATEQWFASVEGFRDQALKAIKEVTWIPTQGENRITPMVGDRSDWCISRQRAWGVPIPVFYDEETSEPLLTEETINHVQQIIAEKGSDAWWELTVEELLPEAYRNNGRTYRKGEDTMDVWFDSGSSWAAVANAKNRPLKYPVDMYLEGSDQHRGWFQSSLLTSVAVNGIAPYKTVLTHGFVLDEKGHKMSKSLGNVVDPYQIINGGKNQKQEPAYGADVLRLWVASVDYANDVPIGQGILKQLVDIRNKIRNTARFLLGNLHDFNPETDAVAYEDLPELDRYMLHRMTEVFTEVTEAYESFQFFKFFQTVQNFCVVDLSNFYLDIAKDRLYISAPNAPRRRSCQTILQLALENLTKAIAPVLCHLAEDIWQFLPYEKPTESVFQSGWVNLDAQWQQPQLAQKWVSLRQLRDGINQLLEQARRDKVIGSSLEAKLIIVDPRTAESGTDEKQGENFVHWFYGWLENFNEPTFDPNDRKISLRNIFLTSQVEFIKSAEIEPSFTYEETVVINLERHDNNIRTKPIKIIVTKADGHKCERCWNYSTQVGSFSDDPTICERCNEALQGNF</sequence>
<accession>P73505</accession>